<evidence type="ECO:0000255" key="1">
    <source>
        <dbReference type="HAMAP-Rule" id="MF_01357"/>
    </source>
</evidence>
<proteinExistence type="inferred from homology"/>
<organism>
    <name type="scientific">Mycobacteroides abscessus (strain ATCC 19977 / DSM 44196 / CCUG 20993 / CIP 104536 / JCM 13569 / NCTC 13031 / TMC 1543 / L948)</name>
    <name type="common">Mycobacterium abscessus</name>
    <dbReference type="NCBI Taxonomy" id="561007"/>
    <lineage>
        <taxon>Bacteria</taxon>
        <taxon>Bacillati</taxon>
        <taxon>Actinomycetota</taxon>
        <taxon>Actinomycetes</taxon>
        <taxon>Mycobacteriales</taxon>
        <taxon>Mycobacteriaceae</taxon>
        <taxon>Mycobacteroides</taxon>
        <taxon>Mycobacteroides abscessus</taxon>
    </lineage>
</organism>
<sequence>MTGGEQKPNEIIGVRRGLFGVRGSGDTSGYGGLVQPISLPVSSNRPYGGYFDQVVDRLESVLAEQENVTYADAVEGVVVYRDQLTIHVKAEHLVQVAQSLRDDPQLRFELSLGVSGVHYPDDSARELHAVYPLMSITWNRRIMLEVAVPESDPHIPSLNAVYPTTDWHERETYDFFGIIFDDHPALTRIQMPDDWDGHPQRKDYPLGGVPVEYHGATIAPPDQRRSYN</sequence>
<gene>
    <name evidence="1" type="primary">nuoC</name>
    <name type="ordered locus">MAB_2136</name>
</gene>
<protein>
    <recommendedName>
        <fullName evidence="1">NADH-quinone oxidoreductase subunit C</fullName>
        <ecNumber evidence="1">7.1.1.-</ecNumber>
    </recommendedName>
    <alternativeName>
        <fullName evidence="1">NADH dehydrogenase I subunit C</fullName>
    </alternativeName>
    <alternativeName>
        <fullName evidence="1">NDH-1 subunit C</fullName>
    </alternativeName>
</protein>
<feature type="chain" id="PRO_0000358131" description="NADH-quinone oxidoreductase subunit C">
    <location>
        <begin position="1"/>
        <end position="228"/>
    </location>
</feature>
<reference key="1">
    <citation type="journal article" date="2009" name="PLoS ONE">
        <title>Non mycobacterial virulence genes in the genome of the emerging pathogen Mycobacterium abscessus.</title>
        <authorList>
            <person name="Ripoll F."/>
            <person name="Pasek S."/>
            <person name="Schenowitz C."/>
            <person name="Dossat C."/>
            <person name="Barbe V."/>
            <person name="Rottman M."/>
            <person name="Macheras E."/>
            <person name="Heym B."/>
            <person name="Herrmann J.L."/>
            <person name="Daffe M."/>
            <person name="Brosch R."/>
            <person name="Risler J.L."/>
            <person name="Gaillard J.L."/>
        </authorList>
    </citation>
    <scope>NUCLEOTIDE SEQUENCE [LARGE SCALE GENOMIC DNA]</scope>
    <source>
        <strain>ATCC 19977 / DSM 44196 / CCUG 20993 / CIP 104536 / JCM 13569 / NCTC 13031 / TMC 1543 / L948</strain>
    </source>
</reference>
<keyword id="KW-1003">Cell membrane</keyword>
<keyword id="KW-0472">Membrane</keyword>
<keyword id="KW-0520">NAD</keyword>
<keyword id="KW-0874">Quinone</keyword>
<keyword id="KW-1185">Reference proteome</keyword>
<keyword id="KW-1278">Translocase</keyword>
<keyword id="KW-0813">Transport</keyword>
<name>NUOC_MYCA9</name>
<accession>B1MPG6</accession>
<dbReference type="EC" id="7.1.1.-" evidence="1"/>
<dbReference type="EMBL" id="CU458896">
    <property type="protein sequence ID" value="CAM62217.1"/>
    <property type="molecule type" value="Genomic_DNA"/>
</dbReference>
<dbReference type="RefSeq" id="WP_005080149.1">
    <property type="nucleotide sequence ID" value="NZ_MLCG01000002.1"/>
</dbReference>
<dbReference type="SMR" id="B1MPG6"/>
<dbReference type="GeneID" id="93379072"/>
<dbReference type="KEGG" id="mab:MAB_2136"/>
<dbReference type="Proteomes" id="UP000007137">
    <property type="component" value="Chromosome"/>
</dbReference>
<dbReference type="GO" id="GO:0005886">
    <property type="term" value="C:plasma membrane"/>
    <property type="evidence" value="ECO:0007669"/>
    <property type="project" value="UniProtKB-SubCell"/>
</dbReference>
<dbReference type="GO" id="GO:0008137">
    <property type="term" value="F:NADH dehydrogenase (ubiquinone) activity"/>
    <property type="evidence" value="ECO:0007669"/>
    <property type="project" value="InterPro"/>
</dbReference>
<dbReference type="GO" id="GO:0050136">
    <property type="term" value="F:NADH:ubiquinone reductase (non-electrogenic) activity"/>
    <property type="evidence" value="ECO:0007669"/>
    <property type="project" value="UniProtKB-UniRule"/>
</dbReference>
<dbReference type="GO" id="GO:0048038">
    <property type="term" value="F:quinone binding"/>
    <property type="evidence" value="ECO:0007669"/>
    <property type="project" value="UniProtKB-KW"/>
</dbReference>
<dbReference type="Gene3D" id="3.30.460.80">
    <property type="entry name" value="NADH:ubiquinone oxidoreductase, 30kDa subunit"/>
    <property type="match status" value="1"/>
</dbReference>
<dbReference type="HAMAP" id="MF_01357">
    <property type="entry name" value="NDH1_NuoC"/>
    <property type="match status" value="1"/>
</dbReference>
<dbReference type="InterPro" id="IPR010218">
    <property type="entry name" value="NADH_DH_suC"/>
</dbReference>
<dbReference type="InterPro" id="IPR037232">
    <property type="entry name" value="NADH_quin_OxRdtase_su_C/D-like"/>
</dbReference>
<dbReference type="InterPro" id="IPR001268">
    <property type="entry name" value="NADH_UbQ_OxRdtase_30kDa_su"/>
</dbReference>
<dbReference type="NCBIfam" id="TIGR01961">
    <property type="entry name" value="NuoC_fam"/>
    <property type="match status" value="1"/>
</dbReference>
<dbReference type="NCBIfam" id="NF005856">
    <property type="entry name" value="PRK07785.1"/>
    <property type="match status" value="1"/>
</dbReference>
<dbReference type="PANTHER" id="PTHR10884:SF14">
    <property type="entry name" value="NADH DEHYDROGENASE [UBIQUINONE] IRON-SULFUR PROTEIN 3, MITOCHONDRIAL"/>
    <property type="match status" value="1"/>
</dbReference>
<dbReference type="PANTHER" id="PTHR10884">
    <property type="entry name" value="NADH DEHYDROGENASE UBIQUINONE IRON-SULFUR PROTEIN 3"/>
    <property type="match status" value="1"/>
</dbReference>
<dbReference type="Pfam" id="PF00329">
    <property type="entry name" value="Complex1_30kDa"/>
    <property type="match status" value="1"/>
</dbReference>
<dbReference type="SUPFAM" id="SSF143243">
    <property type="entry name" value="Nqo5-like"/>
    <property type="match status" value="1"/>
</dbReference>
<comment type="function">
    <text evidence="1">NDH-1 shuttles electrons from NADH, via FMN and iron-sulfur (Fe-S) centers, to quinones in the respiratory chain. The immediate electron acceptor for the enzyme in this species is believed to be a menaquinone. Couples the redox reaction to proton translocation (for every two electrons transferred, four hydrogen ions are translocated across the cytoplasmic membrane), and thus conserves the redox energy in a proton gradient.</text>
</comment>
<comment type="catalytic activity">
    <reaction evidence="1">
        <text>a quinone + NADH + 5 H(+)(in) = a quinol + NAD(+) + 4 H(+)(out)</text>
        <dbReference type="Rhea" id="RHEA:57888"/>
        <dbReference type="ChEBI" id="CHEBI:15378"/>
        <dbReference type="ChEBI" id="CHEBI:24646"/>
        <dbReference type="ChEBI" id="CHEBI:57540"/>
        <dbReference type="ChEBI" id="CHEBI:57945"/>
        <dbReference type="ChEBI" id="CHEBI:132124"/>
    </reaction>
</comment>
<comment type="subunit">
    <text evidence="1">NDH-1 is composed of 14 different subunits. Subunits NuoB, C, D, E, F, and G constitute the peripheral sector of the complex.</text>
</comment>
<comment type="subcellular location">
    <subcellularLocation>
        <location evidence="1">Cell membrane</location>
        <topology evidence="1">Peripheral membrane protein</topology>
        <orientation evidence="1">Cytoplasmic side</orientation>
    </subcellularLocation>
</comment>
<comment type="similarity">
    <text evidence="1">Belongs to the complex I 30 kDa subunit family.</text>
</comment>